<reference key="1">
    <citation type="journal article" date="1987" name="Proc. Natl. Acad. Sci. U.S.A.">
        <title>Sequence and evolution of HLA-DR7- and -DRw53-associated beta-chain genes.</title>
        <authorList>
            <person name="Young J.A.T."/>
            <person name="Wilkinson D."/>
            <person name="Bodmer W.F."/>
            <person name="Trowsdale J."/>
        </authorList>
    </citation>
    <scope>NUCLEOTIDE SEQUENCE [MRNA] (ALLELE DRB4*01:01)</scope>
</reference>
<reference key="2">
    <citation type="journal article" date="2002" name="Tissue Antigens">
        <title>Specific amplification of the HLA-DRB4 gene from c-DNA. Complete coding sequence of the HLA alleles DRB4*0103101 and DRB4*01033.</title>
        <authorList>
            <person name="De Pablo R."/>
            <person name="Solis R."/>
            <person name="Balas A."/>
            <person name="Vilches C."/>
        </authorList>
    </citation>
    <scope>NUCLEOTIDE SEQUENCE [MRNA] (ALLELE DRB4*01:03)</scope>
</reference>
<reference key="3">
    <citation type="submission" date="2005-10" db="EMBL/GenBank/DDBJ databases">
        <title>Human leukocyte antigen DRB4*01030101 allele.</title>
        <authorList>
            <person name="Song C.-H."/>
            <person name="Lee J.-K."/>
            <person name="Koh I."/>
            <person name="Lee J.-Y."/>
            <person name="Lim Y.-H."/>
            <person name="Kang J."/>
            <person name="Cha Y.-Y."/>
            <person name="Yun H.-S."/>
            <person name="Lee E.-J."/>
            <person name="Kwack K."/>
        </authorList>
    </citation>
    <scope>NUCLEOTIDE SEQUENCE [MRNA] (ALLELE DRB4*01:03)</scope>
</reference>
<reference key="4">
    <citation type="submission" date="2009-09" db="EMBL/GenBank/DDBJ databases">
        <title>The MHC class II alleles of Homo sapiens.</title>
        <authorList>
            <person name="Wallace L.T."/>
            <person name="Rudersdorf R."/>
            <person name="Watkins D.I."/>
        </authorList>
    </citation>
    <scope>NUCLEOTIDE SEQUENCE [MRNA] (ALLELE DRB4*01:03)</scope>
</reference>
<reference key="5">
    <citation type="journal article" date="2004" name="Nat. Genet.">
        <title>Complete sequencing and characterization of 21,243 full-length human cDNAs.</title>
        <authorList>
            <person name="Ota T."/>
            <person name="Suzuki Y."/>
            <person name="Nishikawa T."/>
            <person name="Otsuki T."/>
            <person name="Sugiyama T."/>
            <person name="Irie R."/>
            <person name="Wakamatsu A."/>
            <person name="Hayashi K."/>
            <person name="Sato H."/>
            <person name="Nagai K."/>
            <person name="Kimura K."/>
            <person name="Makita H."/>
            <person name="Sekine M."/>
            <person name="Obayashi M."/>
            <person name="Nishi T."/>
            <person name="Shibahara T."/>
            <person name="Tanaka T."/>
            <person name="Ishii S."/>
            <person name="Yamamoto J."/>
            <person name="Saito K."/>
            <person name="Kawai Y."/>
            <person name="Isono Y."/>
            <person name="Nakamura Y."/>
            <person name="Nagahari K."/>
            <person name="Murakami K."/>
            <person name="Yasuda T."/>
            <person name="Iwayanagi T."/>
            <person name="Wagatsuma M."/>
            <person name="Shiratori A."/>
            <person name="Sudo H."/>
            <person name="Hosoiri T."/>
            <person name="Kaku Y."/>
            <person name="Kodaira H."/>
            <person name="Kondo H."/>
            <person name="Sugawara M."/>
            <person name="Takahashi M."/>
            <person name="Kanda K."/>
            <person name="Yokoi T."/>
            <person name="Furuya T."/>
            <person name="Kikkawa E."/>
            <person name="Omura Y."/>
            <person name="Abe K."/>
            <person name="Kamihara K."/>
            <person name="Katsuta N."/>
            <person name="Sato K."/>
            <person name="Tanikawa M."/>
            <person name="Yamazaki M."/>
            <person name="Ninomiya K."/>
            <person name="Ishibashi T."/>
            <person name="Yamashita H."/>
            <person name="Murakawa K."/>
            <person name="Fujimori K."/>
            <person name="Tanai H."/>
            <person name="Kimata M."/>
            <person name="Watanabe M."/>
            <person name="Hiraoka S."/>
            <person name="Chiba Y."/>
            <person name="Ishida S."/>
            <person name="Ono Y."/>
            <person name="Takiguchi S."/>
            <person name="Watanabe S."/>
            <person name="Yosida M."/>
            <person name="Hotuta T."/>
            <person name="Kusano J."/>
            <person name="Kanehori K."/>
            <person name="Takahashi-Fujii A."/>
            <person name="Hara H."/>
            <person name="Tanase T.-O."/>
            <person name="Nomura Y."/>
            <person name="Togiya S."/>
            <person name="Komai F."/>
            <person name="Hara R."/>
            <person name="Takeuchi K."/>
            <person name="Arita M."/>
            <person name="Imose N."/>
            <person name="Musashino K."/>
            <person name="Yuuki H."/>
            <person name="Oshima A."/>
            <person name="Sasaki N."/>
            <person name="Aotsuka S."/>
            <person name="Yoshikawa Y."/>
            <person name="Matsunawa H."/>
            <person name="Ichihara T."/>
            <person name="Shiohata N."/>
            <person name="Sano S."/>
            <person name="Moriya S."/>
            <person name="Momiyama H."/>
            <person name="Satoh N."/>
            <person name="Takami S."/>
            <person name="Terashima Y."/>
            <person name="Suzuki O."/>
            <person name="Nakagawa S."/>
            <person name="Senoh A."/>
            <person name="Mizoguchi H."/>
            <person name="Goto Y."/>
            <person name="Shimizu F."/>
            <person name="Wakebe H."/>
            <person name="Hishigaki H."/>
            <person name="Watanabe T."/>
            <person name="Sugiyama A."/>
            <person name="Takemoto M."/>
            <person name="Kawakami B."/>
            <person name="Yamazaki M."/>
            <person name="Watanabe K."/>
            <person name="Kumagai A."/>
            <person name="Itakura S."/>
            <person name="Fukuzumi Y."/>
            <person name="Fujimori Y."/>
            <person name="Komiyama M."/>
            <person name="Tashiro H."/>
            <person name="Tanigami A."/>
            <person name="Fujiwara T."/>
            <person name="Ono T."/>
            <person name="Yamada K."/>
            <person name="Fujii Y."/>
            <person name="Ozaki K."/>
            <person name="Hirao M."/>
            <person name="Ohmori Y."/>
            <person name="Kawabata A."/>
            <person name="Hikiji T."/>
            <person name="Kobatake N."/>
            <person name="Inagaki H."/>
            <person name="Ikema Y."/>
            <person name="Okamoto S."/>
            <person name="Okitani R."/>
            <person name="Kawakami T."/>
            <person name="Noguchi S."/>
            <person name="Itoh T."/>
            <person name="Shigeta K."/>
            <person name="Senba T."/>
            <person name="Matsumura K."/>
            <person name="Nakajima Y."/>
            <person name="Mizuno T."/>
            <person name="Morinaga M."/>
            <person name="Sasaki M."/>
            <person name="Togashi T."/>
            <person name="Oyama M."/>
            <person name="Hata H."/>
            <person name="Watanabe M."/>
            <person name="Komatsu T."/>
            <person name="Mizushima-Sugano J."/>
            <person name="Satoh T."/>
            <person name="Shirai Y."/>
            <person name="Takahashi Y."/>
            <person name="Nakagawa K."/>
            <person name="Okumura K."/>
            <person name="Nagase T."/>
            <person name="Nomura N."/>
            <person name="Kikuchi H."/>
            <person name="Masuho Y."/>
            <person name="Yamashita R."/>
            <person name="Nakai K."/>
            <person name="Yada T."/>
            <person name="Nakamura Y."/>
            <person name="Ohara O."/>
            <person name="Isogai T."/>
            <person name="Sugano S."/>
        </authorList>
    </citation>
    <scope>NUCLEOTIDE SEQUENCE [LARGE SCALE MRNA] (ALLELE DRB4*01:03)</scope>
    <source>
        <tissue>Synovium</tissue>
    </source>
</reference>
<reference key="6">
    <citation type="journal article" date="2003" name="Nature">
        <title>The DNA sequence and analysis of human chromosome 6.</title>
        <authorList>
            <person name="Mungall A.J."/>
            <person name="Palmer S.A."/>
            <person name="Sims S.K."/>
            <person name="Edwards C.A."/>
            <person name="Ashurst J.L."/>
            <person name="Wilming L."/>
            <person name="Jones M.C."/>
            <person name="Horton R."/>
            <person name="Hunt S.E."/>
            <person name="Scott C.E."/>
            <person name="Gilbert J.G.R."/>
            <person name="Clamp M.E."/>
            <person name="Bethel G."/>
            <person name="Milne S."/>
            <person name="Ainscough R."/>
            <person name="Almeida J.P."/>
            <person name="Ambrose K.D."/>
            <person name="Andrews T.D."/>
            <person name="Ashwell R.I.S."/>
            <person name="Babbage A.K."/>
            <person name="Bagguley C.L."/>
            <person name="Bailey J."/>
            <person name="Banerjee R."/>
            <person name="Barker D.J."/>
            <person name="Barlow K.F."/>
            <person name="Bates K."/>
            <person name="Beare D.M."/>
            <person name="Beasley H."/>
            <person name="Beasley O."/>
            <person name="Bird C.P."/>
            <person name="Blakey S.E."/>
            <person name="Bray-Allen S."/>
            <person name="Brook J."/>
            <person name="Brown A.J."/>
            <person name="Brown J.Y."/>
            <person name="Burford D.C."/>
            <person name="Burrill W."/>
            <person name="Burton J."/>
            <person name="Carder C."/>
            <person name="Carter N.P."/>
            <person name="Chapman J.C."/>
            <person name="Clark S.Y."/>
            <person name="Clark G."/>
            <person name="Clee C.M."/>
            <person name="Clegg S."/>
            <person name="Cobley V."/>
            <person name="Collier R.E."/>
            <person name="Collins J.E."/>
            <person name="Colman L.K."/>
            <person name="Corby N.R."/>
            <person name="Coville G.J."/>
            <person name="Culley K.M."/>
            <person name="Dhami P."/>
            <person name="Davies J."/>
            <person name="Dunn M."/>
            <person name="Earthrowl M.E."/>
            <person name="Ellington A.E."/>
            <person name="Evans K.A."/>
            <person name="Faulkner L."/>
            <person name="Francis M.D."/>
            <person name="Frankish A."/>
            <person name="Frankland J."/>
            <person name="French L."/>
            <person name="Garner P."/>
            <person name="Garnett J."/>
            <person name="Ghori M.J."/>
            <person name="Gilby L.M."/>
            <person name="Gillson C.J."/>
            <person name="Glithero R.J."/>
            <person name="Grafham D.V."/>
            <person name="Grant M."/>
            <person name="Gribble S."/>
            <person name="Griffiths C."/>
            <person name="Griffiths M.N.D."/>
            <person name="Hall R."/>
            <person name="Halls K.S."/>
            <person name="Hammond S."/>
            <person name="Harley J.L."/>
            <person name="Hart E.A."/>
            <person name="Heath P.D."/>
            <person name="Heathcott R."/>
            <person name="Holmes S.J."/>
            <person name="Howden P.J."/>
            <person name="Howe K.L."/>
            <person name="Howell G.R."/>
            <person name="Huckle E."/>
            <person name="Humphray S.J."/>
            <person name="Humphries M.D."/>
            <person name="Hunt A.R."/>
            <person name="Johnson C.M."/>
            <person name="Joy A.A."/>
            <person name="Kay M."/>
            <person name="Keenan S.J."/>
            <person name="Kimberley A.M."/>
            <person name="King A."/>
            <person name="Laird G.K."/>
            <person name="Langford C."/>
            <person name="Lawlor S."/>
            <person name="Leongamornlert D.A."/>
            <person name="Leversha M."/>
            <person name="Lloyd C.R."/>
            <person name="Lloyd D.M."/>
            <person name="Loveland J.E."/>
            <person name="Lovell J."/>
            <person name="Martin S."/>
            <person name="Mashreghi-Mohammadi M."/>
            <person name="Maslen G.L."/>
            <person name="Matthews L."/>
            <person name="McCann O.T."/>
            <person name="McLaren S.J."/>
            <person name="McLay K."/>
            <person name="McMurray A."/>
            <person name="Moore M.J.F."/>
            <person name="Mullikin J.C."/>
            <person name="Niblett D."/>
            <person name="Nickerson T."/>
            <person name="Novik K.L."/>
            <person name="Oliver K."/>
            <person name="Overton-Larty E.K."/>
            <person name="Parker A."/>
            <person name="Patel R."/>
            <person name="Pearce A.V."/>
            <person name="Peck A.I."/>
            <person name="Phillimore B.J.C.T."/>
            <person name="Phillips S."/>
            <person name="Plumb R.W."/>
            <person name="Porter K.M."/>
            <person name="Ramsey Y."/>
            <person name="Ranby S.A."/>
            <person name="Rice C.M."/>
            <person name="Ross M.T."/>
            <person name="Searle S.M."/>
            <person name="Sehra H.K."/>
            <person name="Sheridan E."/>
            <person name="Skuce C.D."/>
            <person name="Smith S."/>
            <person name="Smith M."/>
            <person name="Spraggon L."/>
            <person name="Squares S.L."/>
            <person name="Steward C.A."/>
            <person name="Sycamore N."/>
            <person name="Tamlyn-Hall G."/>
            <person name="Tester J."/>
            <person name="Theaker A.J."/>
            <person name="Thomas D.W."/>
            <person name="Thorpe A."/>
            <person name="Tracey A."/>
            <person name="Tromans A."/>
            <person name="Tubby B."/>
            <person name="Wall M."/>
            <person name="Wallis J.M."/>
            <person name="West A.P."/>
            <person name="White S.S."/>
            <person name="Whitehead S.L."/>
            <person name="Whittaker H."/>
            <person name="Wild A."/>
            <person name="Willey D.J."/>
            <person name="Wilmer T.E."/>
            <person name="Wood J.M."/>
            <person name="Wray P.W."/>
            <person name="Wyatt J.C."/>
            <person name="Young L."/>
            <person name="Younger R.M."/>
            <person name="Bentley D.R."/>
            <person name="Coulson A."/>
            <person name="Durbin R.M."/>
            <person name="Hubbard T."/>
            <person name="Sulston J.E."/>
            <person name="Dunham I."/>
            <person name="Rogers J."/>
            <person name="Beck S."/>
        </authorList>
    </citation>
    <scope>NUCLEOTIDE SEQUENCE [LARGE SCALE GENOMIC DNA] (ALLELE DRB4*01:03)</scope>
</reference>
<reference key="7">
    <citation type="journal article" date="2004" name="Genome Res.">
        <title>The status, quality, and expansion of the NIH full-length cDNA project: the Mammalian Gene Collection (MGC).</title>
        <authorList>
            <consortium name="The MGC Project Team"/>
        </authorList>
    </citation>
    <scope>NUCLEOTIDE SEQUENCE [LARGE SCALE MRNA] (ALLELE DRB4*01:03)</scope>
    <source>
        <tissue>Brain</tissue>
    </source>
</reference>
<reference key="8">
    <citation type="journal article" date="1987" name="Proc. Natl. Acad. Sci. U.S.A.">
        <title>Evolutionary and genetic implications of sequence variation in two nonallelic HLA-DR beta-chain cDNA sequences.</title>
        <authorList>
            <person name="Curtsinger J.M."/>
            <person name="Hilden J.M."/>
            <person name="Cairns J.S."/>
            <person name="Bach F.H."/>
        </authorList>
    </citation>
    <scope>NUCLEOTIDE SEQUENCE [MRNA] OF 21-266 (ALLELE DRB4*01:03)</scope>
</reference>
<reference key="9">
    <citation type="journal article" date="1987" name="J. Biol. Chem.">
        <title>Class II genes of the human major histocompatibility complex. Organization and evolutionary relationship of the DR beta genes.</title>
        <authorList>
            <person name="Andersson G."/>
            <person name="Larhammar D."/>
            <person name="Widmark E."/>
            <person name="Servenius B."/>
            <person name="Peterson P.A."/>
            <person name="Rask L."/>
        </authorList>
    </citation>
    <scope>NUCLEOTIDE SEQUENCE [GENOMIC DNA] OF 35-266 (ALLELE DRB4*01:03)</scope>
</reference>
<reference key="10">
    <citation type="submission" date="2002-12" db="EMBL/GenBank/DDBJ databases">
        <title>HLA-DRB4 exon 2 and exon 3 variation.</title>
        <authorList>
            <person name="Greville W.D."/>
        </authorList>
    </citation>
    <scope>NUCLEOTIDE SEQUENCE [GENOMIC DNA] OF 35-217 (ALLELE DRB4*01:02)</scope>
</reference>
<reference key="11">
    <citation type="submission" date="2001-11" db="EMBL/GenBank/DDBJ databases">
        <title>Novel HLA-DRB4 allele identified by sequencing based typing.</title>
        <authorList>
            <person name="Chapman G."/>
            <person name="Hogbin J.-P."/>
            <person name="Greville W.D."/>
        </authorList>
    </citation>
    <scope>NUCLEOTIDE SEQUENCE [GENOMIC DNA] OF 35-214 (ALLELE DRB4*01:06)</scope>
</reference>
<reference key="12">
    <citation type="submission" date="2003-04" db="EMBL/GenBank/DDBJ databases">
        <title>HLA-DRB4*01V1(DRB4*0104) DNA Sequence.</title>
        <authorList>
            <person name="Kashiwase K."/>
        </authorList>
    </citation>
    <scope>NUCLEOTIDE SEQUENCE [GENOMIC DNA] OF 35-123 (ALLELE DRB4*01:04)</scope>
</reference>
<reference key="13">
    <citation type="journal article" date="1997" name="Tissue Antigens">
        <title>Identification of a new DRB4 allele (DRB4*0105) by sequence-based typing.</title>
        <authorList>
            <person name="Voorter C."/>
            <person name="Emonds M.P."/>
            <person name="van den Berg-Loonen E."/>
        </authorList>
    </citation>
    <scope>NUCLEOTIDE SEQUENCE [GENOMIC DNA] OF 37-116 (ALLELE DRB4*01:05)</scope>
</reference>
<reference key="14">
    <citation type="submission" date="2003-09" db="EMBL/GenBank/DDBJ databases">
        <title>DRB4* genomic sequence: a new allele.</title>
        <authorList>
            <person name="Mele L."/>
            <person name="Binello S."/>
            <person name="Balza G."/>
            <person name="Mazzola G."/>
            <person name="Garino E."/>
        </authorList>
    </citation>
    <scope>NUCLEOTIDE SEQUENCE [GENOMIC DNA] OF 58-120 (ALLELE DRB4*01:07)</scope>
</reference>
<reference key="15">
    <citation type="journal article" date="1996" name="Cell">
        <title>Invariant chain structure and MHC class II function.</title>
        <authorList>
            <person name="Cresswell P."/>
        </authorList>
    </citation>
    <scope>REVIEW</scope>
</reference>
<reference key="16">
    <citation type="journal article" date="2001" name="Mol. Immunol.">
        <title>Presentation of antigens by MHC class II molecules: getting the most out of them.</title>
        <authorList>
            <person name="Villadangos J.A."/>
        </authorList>
    </citation>
    <scope>REVIEW</scope>
</reference>
<reference key="17">
    <citation type="journal article" date="2007" name="Immunity">
        <title>Autophagy in MHC class II presentation: sampling from within.</title>
        <authorList>
            <person name="Menendez-Benito V."/>
            <person name="Neefjes J."/>
        </authorList>
    </citation>
    <scope>REVIEW</scope>
</reference>
<reference key="18">
    <citation type="journal article" date="2008" name="EMBO J.">
        <title>MHC class II molecules on the move for successful antigen presentation.</title>
        <authorList>
            <person name="Rocha N."/>
            <person name="Neefjes J."/>
        </authorList>
    </citation>
    <scope>REVIEW</scope>
</reference>
<reference key="19">
    <citation type="journal article" date="2008" name="Proc. Natl. Acad. Sci. U.S.A.">
        <title>MHC class II stabilization at the surface of human dendritic cells is the result of maturation-dependent MARCH I down-regulation.</title>
        <authorList>
            <person name="De Gassart A."/>
            <person name="Camosseto V."/>
            <person name="Thibodeau J."/>
            <person name="Ceppi M."/>
            <person name="Catalan N."/>
            <person name="Pierre P."/>
            <person name="Gatti E."/>
        </authorList>
    </citation>
    <scope>UBIQUITINATION BY MARCH1</scope>
    <scope>SUBCELLULAR LOCATION</scope>
</reference>
<reference key="20">
    <citation type="journal article" date="2009" name="J. Biol. Chem.">
        <title>The HLA-DRalpha chain is modified by polyubiquitination.</title>
        <authorList>
            <person name="Lapaque N."/>
            <person name="Jahnke M."/>
            <person name="Trowsdale J."/>
            <person name="Kelly A.P."/>
        </authorList>
    </citation>
    <scope>UBIQUITINATION AT LYS-254 BY MARCH1 AND MARCH8</scope>
    <scope>MUTAGENESIS OF LYS-254; LEU-264 AND LEU-265</scope>
    <scope>SUBCELLULAR LOCATION</scope>
</reference>
<reference key="21">
    <citation type="journal article" date="2009" name="J. Cell Sci.">
        <title>MHC class II transport at a glance.</title>
        <authorList>
            <person name="Berger A.C."/>
            <person name="Roche P.A."/>
        </authorList>
    </citation>
    <scope>REVIEW</scope>
</reference>
<reference key="22">
    <citation type="journal article" date="2009" name="World J. Gastroenterol.">
        <title>CD74 in antigen presentation, inflammation, and cancers of the gastrointestinal tract.</title>
        <authorList>
            <person name="Beswick E.J."/>
            <person name="Reyes V.E."/>
        </authorList>
    </citation>
    <scope>REVIEW</scope>
</reference>
<dbReference type="EMBL" id="M16942">
    <property type="protein sequence ID" value="AAA36296.1"/>
    <property type="molecule type" value="mRNA"/>
</dbReference>
<dbReference type="EMBL" id="AF361548">
    <property type="protein sequence ID" value="AAM00252.1"/>
    <property type="molecule type" value="mRNA"/>
</dbReference>
<dbReference type="EMBL" id="AF361549">
    <property type="protein sequence ID" value="AAM00253.1"/>
    <property type="molecule type" value="mRNA"/>
</dbReference>
<dbReference type="EMBL" id="DQ284431">
    <property type="protein sequence ID" value="ABC66198.1"/>
    <property type="molecule type" value="mRNA"/>
</dbReference>
<dbReference type="EMBL" id="GQ891550">
    <property type="protein sequence ID" value="ACX50637.1"/>
    <property type="molecule type" value="mRNA"/>
</dbReference>
<dbReference type="EMBL" id="AK292151">
    <property type="protein sequence ID" value="BAF84840.1"/>
    <property type="molecule type" value="mRNA"/>
</dbReference>
<dbReference type="EMBL" id="BX571807">
    <property type="status" value="NOT_ANNOTATED_CDS"/>
    <property type="molecule type" value="Genomic_DNA"/>
</dbReference>
<dbReference type="EMBL" id="BX120007">
    <property type="status" value="NOT_ANNOTATED_CDS"/>
    <property type="molecule type" value="Genomic_DNA"/>
</dbReference>
<dbReference type="EMBL" id="BX927235">
    <property type="status" value="NOT_ANNOTATED_CDS"/>
    <property type="molecule type" value="Genomic_DNA"/>
</dbReference>
<dbReference type="EMBL" id="CR788250">
    <property type="status" value="NOT_ANNOTATED_CDS"/>
    <property type="molecule type" value="Genomic_DNA"/>
</dbReference>
<dbReference type="EMBL" id="BC005312">
    <property type="protein sequence ID" value="AAH05312.1"/>
    <property type="molecule type" value="mRNA"/>
</dbReference>
<dbReference type="EMBL" id="M15178">
    <property type="protein sequence ID" value="AAA35995.1"/>
    <property type="molecule type" value="mRNA"/>
</dbReference>
<dbReference type="EMBL" id="M20555">
    <property type="protein sequence ID" value="AAA59830.1"/>
    <property type="molecule type" value="Genomic_DNA"/>
</dbReference>
<dbReference type="EMBL" id="AH012539">
    <property type="protein sequence ID" value="AAO43051.1"/>
    <property type="molecule type" value="Genomic_DNA"/>
</dbReference>
<dbReference type="EMBL" id="AH011268">
    <property type="protein sequence ID" value="AAL48256.1"/>
    <property type="molecule type" value="Genomic_DNA"/>
</dbReference>
<dbReference type="EMBL" id="AB107960">
    <property type="protein sequence ID" value="BAC75547.1"/>
    <property type="molecule type" value="Genomic_DNA"/>
</dbReference>
<dbReference type="EMBL" id="Y09313">
    <property type="protein sequence ID" value="CAA70497.1"/>
    <property type="molecule type" value="Genomic_DNA"/>
</dbReference>
<dbReference type="EMBL" id="AY394720">
    <property type="protein sequence ID" value="AAQ96922.1"/>
    <property type="molecule type" value="Genomic_DNA"/>
</dbReference>
<dbReference type="PIR" id="B28031">
    <property type="entry name" value="B28031"/>
</dbReference>
<dbReference type="PIR" id="I59092">
    <property type="entry name" value="I59092"/>
</dbReference>
<dbReference type="PIR" id="PT0168">
    <property type="entry name" value="PT0168"/>
</dbReference>
<dbReference type="RefSeq" id="NP_068818.4">
    <property type="nucleotide sequence ID" value="NM_021983.5"/>
</dbReference>
<dbReference type="RefSeq" id="XP_016885779.1">
    <property type="nucleotide sequence ID" value="XM_017030290.1"/>
</dbReference>
<dbReference type="SMR" id="P13762"/>
<dbReference type="BioGRID" id="109371">
    <property type="interactions" value="10"/>
</dbReference>
<dbReference type="FunCoup" id="P13762">
    <property type="interactions" value="456"/>
</dbReference>
<dbReference type="IntAct" id="P13762">
    <property type="interactions" value="1"/>
</dbReference>
<dbReference type="ChEMBL" id="CHEMBL3988561"/>
<dbReference type="DrugBank" id="DB05121">
    <property type="generic name" value="1D09C3"/>
</dbReference>
<dbReference type="DrugBank" id="DB11294">
    <property type="generic name" value="Coccidioides immitis spherule"/>
</dbReference>
<dbReference type="GlyCosmos" id="P13762">
    <property type="glycosylation" value="1 site, No reported glycans"/>
</dbReference>
<dbReference type="GlyGen" id="P13762">
    <property type="glycosylation" value="1 site, 11 N-linked glycans (1 site)"/>
</dbReference>
<dbReference type="iPTMnet" id="P13762"/>
<dbReference type="PhosphoSitePlus" id="P13762"/>
<dbReference type="BioMuta" id="HLA-DRB4"/>
<dbReference type="DMDM" id="281371554"/>
<dbReference type="jPOST" id="P13762"/>
<dbReference type="MassIVE" id="P13762"/>
<dbReference type="ProteomicsDB" id="52984"/>
<dbReference type="DNASU" id="3126"/>
<dbReference type="Ensembl" id="ENST00000411565.3">
    <property type="protein sequence ID" value="ENSP00000410857.2"/>
    <property type="gene ID" value="ENSG00000227357.3"/>
</dbReference>
<dbReference type="Ensembl" id="ENST00000457451.7">
    <property type="protein sequence ID" value="ENSP00000412031.2"/>
    <property type="gene ID" value="ENSG00000231021.10"/>
</dbReference>
<dbReference type="GeneID" id="3126"/>
<dbReference type="KEGG" id="hsa:3126"/>
<dbReference type="MANE-Select" id="ENST00000457451.7">
    <property type="protein sequence ID" value="ENSP00000412031.2"/>
    <property type="RefSeq nucleotide sequence ID" value="NM_021983.5"/>
    <property type="RefSeq protein sequence ID" value="NP_068818.4"/>
</dbReference>
<dbReference type="AGR" id="HGNC:4952"/>
<dbReference type="CTD" id="3126"/>
<dbReference type="DisGeNET" id="3126"/>
<dbReference type="GeneCards" id="HLA-DRB4"/>
<dbReference type="HGNC" id="HGNC:4952">
    <property type="gene designation" value="HLA-DRB4"/>
</dbReference>
<dbReference type="MalaCards" id="HLA-DRB4"/>
<dbReference type="neXtProt" id="NX_P13762"/>
<dbReference type="OpenTargets" id="ENSG00000227357"/>
<dbReference type="PharmGKB" id="PA35075"/>
<dbReference type="InParanoid" id="P13762"/>
<dbReference type="PAN-GO" id="P13762">
    <property type="GO annotations" value="8 GO annotations based on evolutionary models"/>
</dbReference>
<dbReference type="PhylomeDB" id="P13762"/>
<dbReference type="PathwayCommons" id="P13762"/>
<dbReference type="Reactome" id="R-HSA-202424">
    <property type="pathway name" value="Downstream TCR signaling"/>
</dbReference>
<dbReference type="Reactome" id="R-HSA-202427">
    <property type="pathway name" value="Phosphorylation of CD3 and TCR zeta chains"/>
</dbReference>
<dbReference type="Reactome" id="R-HSA-202430">
    <property type="pathway name" value="Translocation of ZAP-70 to Immunological synapse"/>
</dbReference>
<dbReference type="Reactome" id="R-HSA-202433">
    <property type="pathway name" value="Generation of second messenger molecules"/>
</dbReference>
<dbReference type="Reactome" id="R-HSA-2132295">
    <property type="pathway name" value="MHC class II antigen presentation"/>
</dbReference>
<dbReference type="Reactome" id="R-HSA-389948">
    <property type="pathway name" value="Co-inhibition by PD-1"/>
</dbReference>
<dbReference type="Reactome" id="R-HSA-877300">
    <property type="pathway name" value="Interferon gamma signaling"/>
</dbReference>
<dbReference type="SignaLink" id="P13762"/>
<dbReference type="SIGNOR" id="P13762"/>
<dbReference type="BioGRID-ORCS" id="3126">
    <property type="hits" value="0 hits in 1 CRISPR screen"/>
</dbReference>
<dbReference type="GeneWiki" id="HLA-DRB4"/>
<dbReference type="GenomeRNAi" id="3126"/>
<dbReference type="Pharos" id="P13762">
    <property type="development level" value="Tdark"/>
</dbReference>
<dbReference type="PRO" id="PR:P13762"/>
<dbReference type="Proteomes" id="UP000005640">
    <property type="component" value="Unplaced"/>
</dbReference>
<dbReference type="RNAct" id="P13762">
    <property type="molecule type" value="protein"/>
</dbReference>
<dbReference type="GO" id="GO:0030669">
    <property type="term" value="C:clathrin-coated endocytic vesicle membrane"/>
    <property type="evidence" value="ECO:0000304"/>
    <property type="project" value="Reactome"/>
</dbReference>
<dbReference type="GO" id="GO:0030666">
    <property type="term" value="C:endocytic vesicle membrane"/>
    <property type="evidence" value="ECO:0000304"/>
    <property type="project" value="Reactome"/>
</dbReference>
<dbReference type="GO" id="GO:0012507">
    <property type="term" value="C:ER to Golgi transport vesicle membrane"/>
    <property type="evidence" value="ECO:0000304"/>
    <property type="project" value="Reactome"/>
</dbReference>
<dbReference type="GO" id="GO:0000139">
    <property type="term" value="C:Golgi membrane"/>
    <property type="evidence" value="ECO:0000304"/>
    <property type="project" value="Reactome"/>
</dbReference>
<dbReference type="GO" id="GO:0031902">
    <property type="term" value="C:late endosome membrane"/>
    <property type="evidence" value="ECO:0000314"/>
    <property type="project" value="UniProtKB"/>
</dbReference>
<dbReference type="GO" id="GO:0098553">
    <property type="term" value="C:lumenal side of endoplasmic reticulum membrane"/>
    <property type="evidence" value="ECO:0000304"/>
    <property type="project" value="Reactome"/>
</dbReference>
<dbReference type="GO" id="GO:0005765">
    <property type="term" value="C:lysosomal membrane"/>
    <property type="evidence" value="ECO:0000314"/>
    <property type="project" value="UniProtKB"/>
</dbReference>
<dbReference type="GO" id="GO:0042613">
    <property type="term" value="C:MHC class II protein complex"/>
    <property type="evidence" value="ECO:0000318"/>
    <property type="project" value="GO_Central"/>
</dbReference>
<dbReference type="GO" id="GO:0005886">
    <property type="term" value="C:plasma membrane"/>
    <property type="evidence" value="ECO:0000304"/>
    <property type="project" value="Reactome"/>
</dbReference>
<dbReference type="GO" id="GO:0032588">
    <property type="term" value="C:trans-Golgi network membrane"/>
    <property type="evidence" value="ECO:0000304"/>
    <property type="project" value="Reactome"/>
</dbReference>
<dbReference type="GO" id="GO:0030658">
    <property type="term" value="C:transport vesicle membrane"/>
    <property type="evidence" value="ECO:0000304"/>
    <property type="project" value="Reactome"/>
</dbReference>
<dbReference type="GO" id="GO:0023026">
    <property type="term" value="F:MHC class II protein complex binding"/>
    <property type="evidence" value="ECO:0000318"/>
    <property type="project" value="GO_Central"/>
</dbReference>
<dbReference type="GO" id="GO:0042605">
    <property type="term" value="F:peptide antigen binding"/>
    <property type="evidence" value="ECO:0000318"/>
    <property type="project" value="GO_Central"/>
</dbReference>
<dbReference type="GO" id="GO:0002250">
    <property type="term" value="P:adaptive immune response"/>
    <property type="evidence" value="ECO:0007669"/>
    <property type="project" value="UniProtKB-KW"/>
</dbReference>
<dbReference type="GO" id="GO:0019886">
    <property type="term" value="P:antigen processing and presentation of exogenous peptide antigen via MHC class II"/>
    <property type="evidence" value="ECO:0000318"/>
    <property type="project" value="GO_Central"/>
</dbReference>
<dbReference type="GO" id="GO:0002503">
    <property type="term" value="P:peptide antigen assembly with MHC class II protein complex"/>
    <property type="evidence" value="ECO:0000318"/>
    <property type="project" value="GO_Central"/>
</dbReference>
<dbReference type="GO" id="GO:0050778">
    <property type="term" value="P:positive regulation of immune response"/>
    <property type="evidence" value="ECO:0000318"/>
    <property type="project" value="GO_Central"/>
</dbReference>
<dbReference type="GO" id="GO:0050870">
    <property type="term" value="P:positive regulation of T cell activation"/>
    <property type="evidence" value="ECO:0000318"/>
    <property type="project" value="GO_Central"/>
</dbReference>
<dbReference type="CDD" id="cd21000">
    <property type="entry name" value="IgC1_MHC_II_beta_HLA-DR"/>
    <property type="match status" value="1"/>
</dbReference>
<dbReference type="FunFam" id="2.60.40.10:FF:000116">
    <property type="entry name" value="HLA class II histocompatibility antigen, DRB1-1 beta chain"/>
    <property type="match status" value="1"/>
</dbReference>
<dbReference type="FunFam" id="3.10.320.10:FF:000001">
    <property type="entry name" value="HLA class II histocompatibility antigen, DRB1-1 beta chain"/>
    <property type="match status" value="1"/>
</dbReference>
<dbReference type="Gene3D" id="3.10.320.10">
    <property type="entry name" value="Class II Histocompatibility Antigen, M Beta Chain, Chain B, domain 1"/>
    <property type="match status" value="1"/>
</dbReference>
<dbReference type="Gene3D" id="2.60.40.10">
    <property type="entry name" value="Immunoglobulins"/>
    <property type="match status" value="1"/>
</dbReference>
<dbReference type="InterPro" id="IPR007110">
    <property type="entry name" value="Ig-like_dom"/>
</dbReference>
<dbReference type="InterPro" id="IPR036179">
    <property type="entry name" value="Ig-like_dom_sf"/>
</dbReference>
<dbReference type="InterPro" id="IPR013783">
    <property type="entry name" value="Ig-like_fold"/>
</dbReference>
<dbReference type="InterPro" id="IPR003006">
    <property type="entry name" value="Ig/MHC_CS"/>
</dbReference>
<dbReference type="InterPro" id="IPR003597">
    <property type="entry name" value="Ig_C1-set"/>
</dbReference>
<dbReference type="InterPro" id="IPR050160">
    <property type="entry name" value="MHC/Immunoglobulin"/>
</dbReference>
<dbReference type="InterPro" id="IPR011162">
    <property type="entry name" value="MHC_I/II-like_Ag-recog"/>
</dbReference>
<dbReference type="InterPro" id="IPR014745">
    <property type="entry name" value="MHC_II_a/b_N"/>
</dbReference>
<dbReference type="InterPro" id="IPR000353">
    <property type="entry name" value="MHC_II_b_N"/>
</dbReference>
<dbReference type="PANTHER" id="PTHR19944:SF84">
    <property type="entry name" value="HLA CLASS II HISTOCOMPATIBILITY ANTIGEN, DR BETA 3 CHAIN-RELATED"/>
    <property type="match status" value="1"/>
</dbReference>
<dbReference type="PANTHER" id="PTHR19944">
    <property type="entry name" value="MHC CLASS II-RELATED"/>
    <property type="match status" value="1"/>
</dbReference>
<dbReference type="Pfam" id="PF07654">
    <property type="entry name" value="C1-set"/>
    <property type="match status" value="1"/>
</dbReference>
<dbReference type="Pfam" id="PF00969">
    <property type="entry name" value="MHC_II_beta"/>
    <property type="match status" value="1"/>
</dbReference>
<dbReference type="SMART" id="SM00407">
    <property type="entry name" value="IGc1"/>
    <property type="match status" value="1"/>
</dbReference>
<dbReference type="SMART" id="SM00921">
    <property type="entry name" value="MHC_II_beta"/>
    <property type="match status" value="1"/>
</dbReference>
<dbReference type="SUPFAM" id="SSF48726">
    <property type="entry name" value="Immunoglobulin"/>
    <property type="match status" value="1"/>
</dbReference>
<dbReference type="SUPFAM" id="SSF54452">
    <property type="entry name" value="MHC antigen-recognition domain"/>
    <property type="match status" value="1"/>
</dbReference>
<dbReference type="PROSITE" id="PS50835">
    <property type="entry name" value="IG_LIKE"/>
    <property type="match status" value="1"/>
</dbReference>
<dbReference type="PROSITE" id="PS00290">
    <property type="entry name" value="IG_MHC"/>
    <property type="match status" value="1"/>
</dbReference>
<keyword id="KW-1064">Adaptive immunity</keyword>
<keyword id="KW-1003">Cell membrane</keyword>
<keyword id="KW-1015">Disulfide bond</keyword>
<keyword id="KW-0256">Endoplasmic reticulum</keyword>
<keyword id="KW-0967">Endosome</keyword>
<keyword id="KW-0325">Glycoprotein</keyword>
<keyword id="KW-0333">Golgi apparatus</keyword>
<keyword id="KW-0391">Immunity</keyword>
<keyword id="KW-1017">Isopeptide bond</keyword>
<keyword id="KW-0458">Lysosome</keyword>
<keyword id="KW-0472">Membrane</keyword>
<keyword id="KW-0491">MHC II</keyword>
<keyword id="KW-1267">Proteomics identification</keyword>
<keyword id="KW-1185">Reference proteome</keyword>
<keyword id="KW-0732">Signal</keyword>
<keyword id="KW-0812">Transmembrane</keyword>
<keyword id="KW-1133">Transmembrane helix</keyword>
<keyword id="KW-0832">Ubl conjugation</keyword>
<sequence>MVCLKLPGGSCMAALTVTLTVLSSPLALAGDTQPRFLEQAKCECHFLNGTERVWNLIRYIYNQEEYARYNSDLGEYQAVTELGRPDAEYWNSQKDLLERRRAEVDTYCRYNYGVVESFTVQRRVQPKVTVYPSKTQPLQHHNLLVCSVNGFYPGSIEVRWFRNGQEEKAGVVSTGLIQNGDWTFQTLVMLETVPRSGEVYTCQVEHPSMMSPLTVQWSARSESAQSKMLSGVGGFVLGLLFLGTGLFIYFRNQKGHSGLQPTGLLS</sequence>
<proteinExistence type="evidence at protein level"/>
<name>DRB4_HUMAN</name>
<organism>
    <name type="scientific">Homo sapiens</name>
    <name type="common">Human</name>
    <dbReference type="NCBI Taxonomy" id="9606"/>
    <lineage>
        <taxon>Eukaryota</taxon>
        <taxon>Metazoa</taxon>
        <taxon>Chordata</taxon>
        <taxon>Craniata</taxon>
        <taxon>Vertebrata</taxon>
        <taxon>Euteleostomi</taxon>
        <taxon>Mammalia</taxon>
        <taxon>Eutheria</taxon>
        <taxon>Euarchontoglires</taxon>
        <taxon>Primates</taxon>
        <taxon>Haplorrhini</taxon>
        <taxon>Catarrhini</taxon>
        <taxon>Hominidae</taxon>
        <taxon>Homo</taxon>
    </lineage>
</organism>
<protein>
    <recommendedName>
        <fullName>HLA class II histocompatibility antigen, DR beta 4 chain</fullName>
    </recommendedName>
    <alternativeName>
        <fullName>MHC class II antigen DRB4</fullName>
    </alternativeName>
</protein>
<accession>P13762</accession>
<accession>B0S863</accession>
<accession>O78042</accession>
<accession>P79664</accession>
<accession>Q29889</accession>
<accession>Q30163</accession>
<accession>Q6TLK6</accession>
<accession>Q860N4</accession>
<accession>Q861F3</accession>
<accession>Q8WLT9</accession>
<accession>Q9BS54</accession>
<evidence type="ECO:0000255" key="1"/>
<evidence type="ECO:0000255" key="2">
    <source>
        <dbReference type="PROSITE-ProRule" id="PRU00114"/>
    </source>
</evidence>
<evidence type="ECO:0000269" key="3">
    <source>
    </source>
</evidence>
<evidence type="ECO:0000269" key="4">
    <source>
    </source>
</evidence>
<evidence type="ECO:0000305" key="5"/>
<feature type="signal peptide">
    <location>
        <begin position="1"/>
        <end position="29"/>
    </location>
</feature>
<feature type="chain" id="PRO_0000018991" description="HLA class II histocompatibility antigen, DR beta 4 chain">
    <location>
        <begin position="30"/>
        <end position="266"/>
    </location>
</feature>
<feature type="topological domain" description="Extracellular" evidence="1">
    <location>
        <begin position="30"/>
        <end position="227"/>
    </location>
</feature>
<feature type="transmembrane region" description="Helical" evidence="1">
    <location>
        <begin position="228"/>
        <end position="250"/>
    </location>
</feature>
<feature type="topological domain" description="Cytoplasmic" evidence="1">
    <location>
        <begin position="251"/>
        <end position="266"/>
    </location>
</feature>
<feature type="domain" description="Ig-like C1-type">
    <location>
        <begin position="126"/>
        <end position="216"/>
    </location>
</feature>
<feature type="region of interest" description="Beta-1">
    <location>
        <begin position="30"/>
        <end position="124"/>
    </location>
</feature>
<feature type="region of interest" description="Beta-2">
    <location>
        <begin position="125"/>
        <end position="227"/>
    </location>
</feature>
<feature type="glycosylation site" description="N-linked (GlcNAc...) asparagine" evidence="1">
    <location>
        <position position="48"/>
    </location>
</feature>
<feature type="disulfide bond" evidence="2">
    <location>
        <begin position="44"/>
        <end position="108"/>
    </location>
</feature>
<feature type="disulfide bond" evidence="2">
    <location>
        <begin position="146"/>
        <end position="202"/>
    </location>
</feature>
<feature type="cross-link" description="Glycyl lysine isopeptide (Lys-Gly) (interchain with G-Cter in ubiquitin)" evidence="4">
    <location>
        <position position="254"/>
    </location>
</feature>
<feature type="sequence variant" id="VAR_060778" description="In allele DRB4*01:02.">
    <original>D</original>
    <variation>G</variation>
    <location>
        <position position="105"/>
    </location>
</feature>
<feature type="sequence variant" id="VAR_060779" description="In allele DRB4*01:04.">
    <original>T</original>
    <variation>N</variation>
    <location>
        <position position="106"/>
    </location>
</feature>
<feature type="sequence variant" id="VAR_060780" description="In allele DRB4*01:05.">
    <original>Y</original>
    <variation>H</variation>
    <location>
        <position position="110"/>
    </location>
</feature>
<feature type="sequence variant" id="VAR_060781" description="In allele DRB4*01:07.">
    <original>G</original>
    <variation>R</variation>
    <location>
        <position position="113"/>
    </location>
</feature>
<feature type="sequence variant" id="VAR_060782" description="In allele DRB4*01:06.">
    <original>H</original>
    <variation>Y</variation>
    <location>
        <position position="141"/>
    </location>
</feature>
<feature type="sequence variant" id="VAR_060783" description="In allele DRB4*01:01 and allele DRB4*01:06.">
    <original>G</original>
    <variation>S</variation>
    <location>
        <position position="164"/>
    </location>
</feature>
<feature type="mutagenesis site" description="Almost no change in down-regulation of MHC class II. No ubiquitination and complete loss of down-regulation of MHC class II; when associated with 'R-244' of HLA-DRA." evidence="4">
    <original>K</original>
    <variation>R</variation>
    <location>
        <position position="254"/>
    </location>
</feature>
<feature type="mutagenesis site" description="Almost no change in down-regulation of MHC class II; when associated with A-265." evidence="4">
    <original>L</original>
    <variation>A</variation>
    <location>
        <position position="264"/>
    </location>
</feature>
<feature type="mutagenesis site" description="Almost no change in down-regulation of MHC class II; when associated with A-264." evidence="4">
    <original>L</original>
    <variation>A</variation>
    <location>
        <position position="265"/>
    </location>
</feature>
<comment type="function">
    <text>Binds peptides derived from antigens that access the endocytic route of antigen presenting cells (APC) and presents them on the cell surface for recognition by the CD4 T-cells. The peptide binding cleft accommodates peptides of 10-30 residues. The peptides presented by MHC class II molecules are generated mostly by degradation of proteins that access the endocytic route, where they are processed by lysosomal proteases and other hydrolases. Exogenous antigens that have been endocytosed by the APC are thus readily available for presentation via MHC II molecules, and for this reason this antigen presentation pathway is usually referred to as exogenous. As membrane proteins on their way to degradation in lysosomes as part of their normal turn-over are also contained in the endosomal/lysosomal compartments, exogenous antigens must compete with those derived from endogenous components. Autophagy is also a source of endogenous peptides, autophagosomes constitutively fuse with MHC class II loading compartments. In addition to APCs, other cells of the gastrointestinal tract, such as epithelial cells, express MHC class II molecules and CD74 and act as APCs, which is an unusual trait of the GI tract. To produce a MHC class II molecule that presents an antigen, three MHC class II molecules (heterodimers of an alpha and a beta chain) associate with a CD74 trimer in the ER to form a heterononamer. Soon after the entry of this complex into the endosomal/lysosomal system where antigen processing occurs, CD74 undergoes a sequential degradation by various proteases, including CTSS and CTSL, leaving a small fragment termed CLIP (class-II-associated invariant chain peptide). The removal of CLIP is facilitated by HLA-DM via direct binding to the alpha-beta-CLIP complex so that CLIP is released. HLA-DM stabilizes MHC class II molecules until primary high affinity antigenic peptides are bound. The MHC II molecule bound to a peptide is then transported to the cell membrane surface. In B-cells, the interaction between HLA-DM and MHC class II molecules is regulated by HLA-DO. Primary dendritic cells (DCs) also to express HLA-DO. Lysosomal microenvironment has been implicated in the regulation of antigen loading into MHC II molecules, increased acidification produces increased proteolysis and efficient peptide loading.</text>
</comment>
<comment type="subunit">
    <text>Heterodimer of an alpha and a beta subunit; also referred as MHC class II molecule. In the endoplasmic reticulum (ER) it forms a heterononamer; 3 MHC class II molecules bind to a CD74 homotrimer (also known as invariant chain or HLA class II histocompatibility antigen gamma chain). In the endosomal/lysosomal system; CD74 undergoes sequential degradation by various proteases; leaving a small fragment termed CLIP on each MHC class II molecule. MHC class II molecule interacts with HLA_DM, and HLA_DO in B-cells, in order to release CLIP and facilitate the binding of antigenic peptides.</text>
</comment>
<comment type="subcellular location">
    <subcellularLocation>
        <location>Cell membrane</location>
        <topology>Single-pass type I membrane protein</topology>
    </subcellularLocation>
    <subcellularLocation>
        <location>Endoplasmic reticulum membrane</location>
        <topology>Single-pass type I membrane protein</topology>
    </subcellularLocation>
    <subcellularLocation>
        <location>Golgi apparatus</location>
        <location>trans-Golgi network membrane</location>
        <topology>Single-pass type I membrane protein</topology>
    </subcellularLocation>
    <subcellularLocation>
        <location>Endosome membrane</location>
        <topology>Single-pass type I membrane protein</topology>
    </subcellularLocation>
    <subcellularLocation>
        <location>Lysosome membrane</location>
        <topology>Single-pass type I membrane protein</topology>
    </subcellularLocation>
    <subcellularLocation>
        <location>Late endosome membrane</location>
        <topology>Single-pass type I membrane protein</topology>
    </subcellularLocation>
    <text>The MHC class II complex transits through a number of intracellular compartments in the endocytic pathway until it reaches the cell membrane for antigen presentation.</text>
</comment>
<comment type="PTM">
    <text evidence="3 4">Ubiquitinated by MARCH1 and MARCH8 at Lys-254 leading to sorting into the endosome system and down-regulation of MHC class II. When associated with ubiquitination of the alpha subunit of HLA-DR: HLA-DRA 'Lys-244', the down-regulation of MHC class II may be highly effective.</text>
</comment>
<comment type="polymorphism">
    <text>The following alleles of DRB4 are known: DRB4*01:01, DRB4*01:02, DRB4*01:03, DRB4*01:04, DRB4*01:05, DRB4*01:06 and DRB4*01:07. The sequence shown is that of DRB4*01:03.</text>
</comment>
<comment type="similarity">
    <text evidence="5">Belongs to the MHC class II family.</text>
</comment>
<comment type="caution">
    <text evidence="5">HLA-DRB3, HLA-DRB4 and HLA-DRB5 may represent a unique gene.</text>
</comment>
<gene>
    <name type="primary">HLA-DRB4</name>
</gene>